<dbReference type="EMBL" id="AE017340">
    <property type="protein sequence ID" value="AAV82748.1"/>
    <property type="molecule type" value="Genomic_DNA"/>
</dbReference>
<dbReference type="RefSeq" id="WP_011235145.1">
    <property type="nucleotide sequence ID" value="NC_006512.1"/>
</dbReference>
<dbReference type="SMR" id="Q5QXX2"/>
<dbReference type="STRING" id="283942.IL1916"/>
<dbReference type="GeneID" id="78252635"/>
<dbReference type="KEGG" id="ilo:IL1916"/>
<dbReference type="eggNOG" id="COG0255">
    <property type="taxonomic scope" value="Bacteria"/>
</dbReference>
<dbReference type="HOGENOM" id="CLU_158491_1_0_6"/>
<dbReference type="OrthoDB" id="9815192at2"/>
<dbReference type="Proteomes" id="UP000001171">
    <property type="component" value="Chromosome"/>
</dbReference>
<dbReference type="GO" id="GO:0022625">
    <property type="term" value="C:cytosolic large ribosomal subunit"/>
    <property type="evidence" value="ECO:0007669"/>
    <property type="project" value="TreeGrafter"/>
</dbReference>
<dbReference type="GO" id="GO:0003735">
    <property type="term" value="F:structural constituent of ribosome"/>
    <property type="evidence" value="ECO:0007669"/>
    <property type="project" value="InterPro"/>
</dbReference>
<dbReference type="GO" id="GO:0006412">
    <property type="term" value="P:translation"/>
    <property type="evidence" value="ECO:0007669"/>
    <property type="project" value="UniProtKB-UniRule"/>
</dbReference>
<dbReference type="CDD" id="cd00427">
    <property type="entry name" value="Ribosomal_L29_HIP"/>
    <property type="match status" value="1"/>
</dbReference>
<dbReference type="Gene3D" id="6.10.140.1970">
    <property type="match status" value="1"/>
</dbReference>
<dbReference type="HAMAP" id="MF_00374">
    <property type="entry name" value="Ribosomal_uL29"/>
    <property type="match status" value="1"/>
</dbReference>
<dbReference type="InterPro" id="IPR050063">
    <property type="entry name" value="Ribosomal_protein_uL29"/>
</dbReference>
<dbReference type="InterPro" id="IPR001854">
    <property type="entry name" value="Ribosomal_uL29"/>
</dbReference>
<dbReference type="InterPro" id="IPR018254">
    <property type="entry name" value="Ribosomal_uL29_CS"/>
</dbReference>
<dbReference type="InterPro" id="IPR036049">
    <property type="entry name" value="Ribosomal_uL29_sf"/>
</dbReference>
<dbReference type="NCBIfam" id="TIGR00012">
    <property type="entry name" value="L29"/>
    <property type="match status" value="1"/>
</dbReference>
<dbReference type="PANTHER" id="PTHR10916">
    <property type="entry name" value="60S RIBOSOMAL PROTEIN L35/50S RIBOSOMAL PROTEIN L29"/>
    <property type="match status" value="1"/>
</dbReference>
<dbReference type="PANTHER" id="PTHR10916:SF0">
    <property type="entry name" value="LARGE RIBOSOMAL SUBUNIT PROTEIN UL29C"/>
    <property type="match status" value="1"/>
</dbReference>
<dbReference type="Pfam" id="PF00831">
    <property type="entry name" value="Ribosomal_L29"/>
    <property type="match status" value="1"/>
</dbReference>
<dbReference type="SUPFAM" id="SSF46561">
    <property type="entry name" value="Ribosomal protein L29 (L29p)"/>
    <property type="match status" value="1"/>
</dbReference>
<dbReference type="PROSITE" id="PS00579">
    <property type="entry name" value="RIBOSOMAL_L29"/>
    <property type="match status" value="1"/>
</dbReference>
<keyword id="KW-1185">Reference proteome</keyword>
<keyword id="KW-0687">Ribonucleoprotein</keyword>
<keyword id="KW-0689">Ribosomal protein</keyword>
<feature type="chain" id="PRO_0000130402" description="Large ribosomal subunit protein uL29">
    <location>
        <begin position="1"/>
        <end position="63"/>
    </location>
</feature>
<reference key="1">
    <citation type="journal article" date="2004" name="Proc. Natl. Acad. Sci. U.S.A.">
        <title>Genome sequence of the deep-sea gamma-proteobacterium Idiomarina loihiensis reveals amino acid fermentation as a source of carbon and energy.</title>
        <authorList>
            <person name="Hou S."/>
            <person name="Saw J.H."/>
            <person name="Lee K.S."/>
            <person name="Freitas T.A."/>
            <person name="Belisle C."/>
            <person name="Kawarabayasi Y."/>
            <person name="Donachie S.P."/>
            <person name="Pikina A."/>
            <person name="Galperin M.Y."/>
            <person name="Koonin E.V."/>
            <person name="Makarova K.S."/>
            <person name="Omelchenko M.V."/>
            <person name="Sorokin A."/>
            <person name="Wolf Y.I."/>
            <person name="Li Q.X."/>
            <person name="Keum Y.S."/>
            <person name="Campbell S."/>
            <person name="Denery J."/>
            <person name="Aizawa S."/>
            <person name="Shibata S."/>
            <person name="Malahoff A."/>
            <person name="Alam M."/>
        </authorList>
    </citation>
    <scope>NUCLEOTIDE SEQUENCE [LARGE SCALE GENOMIC DNA]</scope>
    <source>
        <strain>ATCC BAA-735 / DSM 15497 / L2-TR</strain>
    </source>
</reference>
<sequence>MKASELKDKTVEQLQEELLGLRREQFNLRMQAATGQLNQTHMMKQVRRDIARVKTILNEKAGA</sequence>
<organism>
    <name type="scientific">Idiomarina loihiensis (strain ATCC BAA-735 / DSM 15497 / L2-TR)</name>
    <dbReference type="NCBI Taxonomy" id="283942"/>
    <lineage>
        <taxon>Bacteria</taxon>
        <taxon>Pseudomonadati</taxon>
        <taxon>Pseudomonadota</taxon>
        <taxon>Gammaproteobacteria</taxon>
        <taxon>Alteromonadales</taxon>
        <taxon>Idiomarinaceae</taxon>
        <taxon>Idiomarina</taxon>
    </lineage>
</organism>
<proteinExistence type="inferred from homology"/>
<comment type="similarity">
    <text evidence="1">Belongs to the universal ribosomal protein uL29 family.</text>
</comment>
<gene>
    <name evidence="1" type="primary">rpmC</name>
    <name type="ordered locus">IL1916</name>
</gene>
<accession>Q5QXX2</accession>
<protein>
    <recommendedName>
        <fullName evidence="1">Large ribosomal subunit protein uL29</fullName>
    </recommendedName>
    <alternativeName>
        <fullName evidence="2">50S ribosomal protein L29</fullName>
    </alternativeName>
</protein>
<name>RL29_IDILO</name>
<evidence type="ECO:0000255" key="1">
    <source>
        <dbReference type="HAMAP-Rule" id="MF_00374"/>
    </source>
</evidence>
<evidence type="ECO:0000305" key="2"/>